<dbReference type="EMBL" id="CR378676">
    <property type="protein sequence ID" value="CAG22368.1"/>
    <property type="molecule type" value="Genomic_DNA"/>
</dbReference>
<dbReference type="RefSeq" id="WP_011220577.1">
    <property type="nucleotide sequence ID" value="NC_006371.1"/>
</dbReference>
<dbReference type="SMR" id="Q6LK12"/>
<dbReference type="KEGG" id="ppr:PBPRB0495"/>
<dbReference type="eggNOG" id="COG1742">
    <property type="taxonomic scope" value="Bacteria"/>
</dbReference>
<dbReference type="HOGENOM" id="CLU_117653_2_0_6"/>
<dbReference type="Proteomes" id="UP000000593">
    <property type="component" value="Chromosome 2"/>
</dbReference>
<dbReference type="GO" id="GO:0005886">
    <property type="term" value="C:plasma membrane"/>
    <property type="evidence" value="ECO:0007669"/>
    <property type="project" value="UniProtKB-SubCell"/>
</dbReference>
<dbReference type="HAMAP" id="MF_00010">
    <property type="entry name" value="UPF0060"/>
    <property type="match status" value="1"/>
</dbReference>
<dbReference type="InterPro" id="IPR003844">
    <property type="entry name" value="UPF0060"/>
</dbReference>
<dbReference type="NCBIfam" id="NF002586">
    <property type="entry name" value="PRK02237.1"/>
    <property type="match status" value="1"/>
</dbReference>
<dbReference type="PANTHER" id="PTHR36116">
    <property type="entry name" value="UPF0060 MEMBRANE PROTEIN YNFA"/>
    <property type="match status" value="1"/>
</dbReference>
<dbReference type="PANTHER" id="PTHR36116:SF1">
    <property type="entry name" value="UPF0060 MEMBRANE PROTEIN YNFA"/>
    <property type="match status" value="1"/>
</dbReference>
<dbReference type="Pfam" id="PF02694">
    <property type="entry name" value="UPF0060"/>
    <property type="match status" value="1"/>
</dbReference>
<dbReference type="SUPFAM" id="SSF103481">
    <property type="entry name" value="Multidrug resistance efflux transporter EmrE"/>
    <property type="match status" value="1"/>
</dbReference>
<feature type="chain" id="PRO_0000162336" description="UPF0060 membrane protein PBPRB0495">
    <location>
        <begin position="1"/>
        <end position="110"/>
    </location>
</feature>
<feature type="transmembrane region" description="Helical" evidence="1">
    <location>
        <begin position="7"/>
        <end position="27"/>
    </location>
</feature>
<feature type="transmembrane region" description="Helical" evidence="1">
    <location>
        <begin position="33"/>
        <end position="53"/>
    </location>
</feature>
<feature type="transmembrane region" description="Helical" evidence="1">
    <location>
        <begin position="63"/>
        <end position="83"/>
    </location>
</feature>
<feature type="transmembrane region" description="Helical" evidence="1">
    <location>
        <begin position="85"/>
        <end position="105"/>
    </location>
</feature>
<proteinExistence type="inferred from homology"/>
<name>Y4495_PHOPR</name>
<gene>
    <name type="ordered locus">PBPRB0495</name>
</gene>
<accession>Q6LK12</accession>
<evidence type="ECO:0000255" key="1">
    <source>
        <dbReference type="HAMAP-Rule" id="MF_00010"/>
    </source>
</evidence>
<organism>
    <name type="scientific">Photobacterium profundum (strain SS9)</name>
    <dbReference type="NCBI Taxonomy" id="298386"/>
    <lineage>
        <taxon>Bacteria</taxon>
        <taxon>Pseudomonadati</taxon>
        <taxon>Pseudomonadota</taxon>
        <taxon>Gammaproteobacteria</taxon>
        <taxon>Vibrionales</taxon>
        <taxon>Vibrionaceae</taxon>
        <taxon>Photobacterium</taxon>
    </lineage>
</organism>
<comment type="subcellular location">
    <subcellularLocation>
        <location evidence="1">Cell inner membrane</location>
        <topology evidence="1">Multi-pass membrane protein</topology>
    </subcellularLocation>
</comment>
<comment type="similarity">
    <text evidence="1">Belongs to the UPF0060 family.</text>
</comment>
<reference key="1">
    <citation type="journal article" date="2005" name="Science">
        <title>Life at depth: Photobacterium profundum genome sequence and expression analysis.</title>
        <authorList>
            <person name="Vezzi A."/>
            <person name="Campanaro S."/>
            <person name="D'Angelo M."/>
            <person name="Simonato F."/>
            <person name="Vitulo N."/>
            <person name="Lauro F.M."/>
            <person name="Cestaro A."/>
            <person name="Malacrida G."/>
            <person name="Simionati B."/>
            <person name="Cannata N."/>
            <person name="Romualdi C."/>
            <person name="Bartlett D.H."/>
            <person name="Valle G."/>
        </authorList>
    </citation>
    <scope>NUCLEOTIDE SEQUENCE [LARGE SCALE GENOMIC DNA]</scope>
    <source>
        <strain>ATCC BAA-1253 / SS9</strain>
    </source>
</reference>
<keyword id="KW-0997">Cell inner membrane</keyword>
<keyword id="KW-1003">Cell membrane</keyword>
<keyword id="KW-0472">Membrane</keyword>
<keyword id="KW-1185">Reference proteome</keyword>
<keyword id="KW-0812">Transmembrane</keyword>
<keyword id="KW-1133">Transmembrane helix</keyword>
<sequence>MPELKTVGLFFITAIAEIIGCYLPYLWLREGKTIWLLIPAAISLALFAWLLTLHPAAAGRVYAAYGGVYIFTAILWLWLVDGIRPTVWDFVGVFVALLGMAIIMFSPRPA</sequence>
<protein>
    <recommendedName>
        <fullName evidence="1">UPF0060 membrane protein PBPRB0495</fullName>
    </recommendedName>
</protein>